<accession>A0JZ51</accession>
<evidence type="ECO:0000255" key="1">
    <source>
        <dbReference type="HAMAP-Rule" id="MF_01315"/>
    </source>
</evidence>
<evidence type="ECO:0000256" key="2">
    <source>
        <dbReference type="SAM" id="MobiDB-lite"/>
    </source>
</evidence>
<evidence type="ECO:0000305" key="3"/>
<dbReference type="EMBL" id="CP000454">
    <property type="protein sequence ID" value="ABK04321.1"/>
    <property type="molecule type" value="Genomic_DNA"/>
</dbReference>
<dbReference type="RefSeq" id="WP_011692780.1">
    <property type="nucleotide sequence ID" value="NC_008541.1"/>
</dbReference>
<dbReference type="SMR" id="A0JZ51"/>
<dbReference type="STRING" id="290399.Arth_2942"/>
<dbReference type="KEGG" id="art:Arth_2942"/>
<dbReference type="eggNOG" id="COG0099">
    <property type="taxonomic scope" value="Bacteria"/>
</dbReference>
<dbReference type="HOGENOM" id="CLU_103849_1_2_11"/>
<dbReference type="OrthoDB" id="9803610at2"/>
<dbReference type="Proteomes" id="UP000000754">
    <property type="component" value="Chromosome"/>
</dbReference>
<dbReference type="GO" id="GO:0005829">
    <property type="term" value="C:cytosol"/>
    <property type="evidence" value="ECO:0007669"/>
    <property type="project" value="TreeGrafter"/>
</dbReference>
<dbReference type="GO" id="GO:0015935">
    <property type="term" value="C:small ribosomal subunit"/>
    <property type="evidence" value="ECO:0007669"/>
    <property type="project" value="TreeGrafter"/>
</dbReference>
<dbReference type="GO" id="GO:0019843">
    <property type="term" value="F:rRNA binding"/>
    <property type="evidence" value="ECO:0007669"/>
    <property type="project" value="UniProtKB-UniRule"/>
</dbReference>
<dbReference type="GO" id="GO:0003735">
    <property type="term" value="F:structural constituent of ribosome"/>
    <property type="evidence" value="ECO:0007669"/>
    <property type="project" value="InterPro"/>
</dbReference>
<dbReference type="GO" id="GO:0000049">
    <property type="term" value="F:tRNA binding"/>
    <property type="evidence" value="ECO:0007669"/>
    <property type="project" value="UniProtKB-UniRule"/>
</dbReference>
<dbReference type="GO" id="GO:0006412">
    <property type="term" value="P:translation"/>
    <property type="evidence" value="ECO:0007669"/>
    <property type="project" value="UniProtKB-UniRule"/>
</dbReference>
<dbReference type="FunFam" id="1.10.8.50:FF:000001">
    <property type="entry name" value="30S ribosomal protein S13"/>
    <property type="match status" value="1"/>
</dbReference>
<dbReference type="FunFam" id="4.10.910.10:FF:000001">
    <property type="entry name" value="30S ribosomal protein S13"/>
    <property type="match status" value="1"/>
</dbReference>
<dbReference type="Gene3D" id="1.10.8.50">
    <property type="match status" value="1"/>
</dbReference>
<dbReference type="Gene3D" id="4.10.910.10">
    <property type="entry name" value="30s ribosomal protein s13, domain 2"/>
    <property type="match status" value="1"/>
</dbReference>
<dbReference type="HAMAP" id="MF_01315">
    <property type="entry name" value="Ribosomal_uS13"/>
    <property type="match status" value="1"/>
</dbReference>
<dbReference type="InterPro" id="IPR027437">
    <property type="entry name" value="Rbsml_uS13_C"/>
</dbReference>
<dbReference type="InterPro" id="IPR001892">
    <property type="entry name" value="Ribosomal_uS13"/>
</dbReference>
<dbReference type="InterPro" id="IPR010979">
    <property type="entry name" value="Ribosomal_uS13-like_H2TH"/>
</dbReference>
<dbReference type="InterPro" id="IPR019980">
    <property type="entry name" value="Ribosomal_uS13_bac-type"/>
</dbReference>
<dbReference type="InterPro" id="IPR018269">
    <property type="entry name" value="Ribosomal_uS13_CS"/>
</dbReference>
<dbReference type="NCBIfam" id="TIGR03631">
    <property type="entry name" value="uS13_bact"/>
    <property type="match status" value="1"/>
</dbReference>
<dbReference type="PANTHER" id="PTHR10871">
    <property type="entry name" value="30S RIBOSOMAL PROTEIN S13/40S RIBOSOMAL PROTEIN S18"/>
    <property type="match status" value="1"/>
</dbReference>
<dbReference type="PANTHER" id="PTHR10871:SF1">
    <property type="entry name" value="SMALL RIBOSOMAL SUBUNIT PROTEIN US13M"/>
    <property type="match status" value="1"/>
</dbReference>
<dbReference type="Pfam" id="PF00416">
    <property type="entry name" value="Ribosomal_S13"/>
    <property type="match status" value="1"/>
</dbReference>
<dbReference type="PIRSF" id="PIRSF002134">
    <property type="entry name" value="Ribosomal_S13"/>
    <property type="match status" value="1"/>
</dbReference>
<dbReference type="SUPFAM" id="SSF46946">
    <property type="entry name" value="S13-like H2TH domain"/>
    <property type="match status" value="1"/>
</dbReference>
<dbReference type="PROSITE" id="PS00646">
    <property type="entry name" value="RIBOSOMAL_S13_1"/>
    <property type="match status" value="1"/>
</dbReference>
<dbReference type="PROSITE" id="PS50159">
    <property type="entry name" value="RIBOSOMAL_S13_2"/>
    <property type="match status" value="1"/>
</dbReference>
<gene>
    <name evidence="1" type="primary">rpsM</name>
    <name type="ordered locus">Arth_2942</name>
</gene>
<proteinExistence type="inferred from homology"/>
<protein>
    <recommendedName>
        <fullName evidence="1">Small ribosomal subunit protein uS13</fullName>
    </recommendedName>
    <alternativeName>
        <fullName evidence="3">30S ribosomal protein S13</fullName>
    </alternativeName>
</protein>
<name>RS13_ARTS2</name>
<organism>
    <name type="scientific">Arthrobacter sp. (strain FB24)</name>
    <dbReference type="NCBI Taxonomy" id="290399"/>
    <lineage>
        <taxon>Bacteria</taxon>
        <taxon>Bacillati</taxon>
        <taxon>Actinomycetota</taxon>
        <taxon>Actinomycetes</taxon>
        <taxon>Micrococcales</taxon>
        <taxon>Micrococcaceae</taxon>
        <taxon>Arthrobacter</taxon>
    </lineage>
</organism>
<reference key="1">
    <citation type="journal article" date="2013" name="Stand. Genomic Sci.">
        <title>Complete genome sequence of Arthrobacter sp. strain FB24.</title>
        <authorList>
            <person name="Nakatsu C.H."/>
            <person name="Barabote R."/>
            <person name="Thompson S."/>
            <person name="Bruce D."/>
            <person name="Detter C."/>
            <person name="Brettin T."/>
            <person name="Han C."/>
            <person name="Beasley F."/>
            <person name="Chen W."/>
            <person name="Konopka A."/>
            <person name="Xie G."/>
        </authorList>
    </citation>
    <scope>NUCLEOTIDE SEQUENCE [LARGE SCALE GENOMIC DNA]</scope>
    <source>
        <strain>FB24</strain>
    </source>
</reference>
<comment type="function">
    <text evidence="1">Located at the top of the head of the 30S subunit, it contacts several helices of the 16S rRNA. In the 70S ribosome it contacts the 23S rRNA (bridge B1a) and protein L5 of the 50S subunit (bridge B1b), connecting the 2 subunits; these bridges are implicated in subunit movement. Contacts the tRNAs in the A and P-sites.</text>
</comment>
<comment type="subunit">
    <text evidence="1">Part of the 30S ribosomal subunit. Forms a loose heterodimer with protein S19. Forms two bridges to the 50S subunit in the 70S ribosome.</text>
</comment>
<comment type="similarity">
    <text evidence="1">Belongs to the universal ribosomal protein uS13 family.</text>
</comment>
<keyword id="KW-1185">Reference proteome</keyword>
<keyword id="KW-0687">Ribonucleoprotein</keyword>
<keyword id="KW-0689">Ribosomal protein</keyword>
<keyword id="KW-0694">RNA-binding</keyword>
<keyword id="KW-0699">rRNA-binding</keyword>
<keyword id="KW-0820">tRNA-binding</keyword>
<sequence length="125" mass="13997">MARLAGVDIPREKRLEIALTYIYGVGKTRAHETLAATGISADVRVKDLTDAQLVELRDYIEGNYKVEGDLRREVAADIRRKVEIGSYEGLRHRKGLPVRGQRTKTNARTRKGPKRTVAGKKKAGR</sequence>
<feature type="chain" id="PRO_0000306561" description="Small ribosomal subunit protein uS13">
    <location>
        <begin position="1"/>
        <end position="125"/>
    </location>
</feature>
<feature type="region of interest" description="Disordered" evidence="2">
    <location>
        <begin position="93"/>
        <end position="125"/>
    </location>
</feature>